<protein>
    <recommendedName>
        <fullName>Fatty-acid and retinol-binding protein 1</fullName>
    </recommendedName>
    <alternativeName>
        <fullName>Og-FAR-1</fullName>
    </alternativeName>
</protein>
<name>FAR1_ONCGU</name>
<gene>
    <name evidence="6" type="primary">far-1</name>
</gene>
<feature type="signal peptide" evidence="3">
    <location>
        <begin position="1"/>
        <end position="16"/>
    </location>
</feature>
<feature type="chain" id="PRO_0000008763" description="Fatty-acid and retinol-binding protein 1" evidence="3">
    <location>
        <begin position="17"/>
        <end position="178"/>
    </location>
</feature>
<feature type="coiled-coil region" evidence="3">
    <location>
        <begin position="67"/>
        <end position="89"/>
    </location>
</feature>
<feature type="coiled-coil region" evidence="3">
    <location>
        <begin position="123"/>
        <end position="154"/>
    </location>
</feature>
<feature type="glycosylation site" description="N-linked (GlcNAc...) asparagine" evidence="3">
    <location>
        <position position="44"/>
    </location>
</feature>
<feature type="glycosylation site" description="N-linked (GlcNAc...) asparagine" evidence="3">
    <location>
        <position position="75"/>
    </location>
</feature>
<feature type="glycosylation site" description="N-linked (GlcNAc...) asparagine" evidence="3">
    <location>
        <position position="157"/>
    </location>
</feature>
<proteinExistence type="evidence at protein level"/>
<accession>Q8WT59</accession>
<dbReference type="EMBL" id="AY050253">
    <property type="protein sequence ID" value="AAL33789.1"/>
    <property type="molecule type" value="mRNA"/>
</dbReference>
<dbReference type="SMR" id="Q8WT59"/>
<dbReference type="GlyCosmos" id="Q8WT59">
    <property type="glycosylation" value="3 sites, No reported glycans"/>
</dbReference>
<dbReference type="GO" id="GO:0005576">
    <property type="term" value="C:extracellular region"/>
    <property type="evidence" value="ECO:0000314"/>
    <property type="project" value="UniProtKB"/>
</dbReference>
<dbReference type="GO" id="GO:0005504">
    <property type="term" value="F:fatty acid binding"/>
    <property type="evidence" value="ECO:0000250"/>
    <property type="project" value="UniProtKB"/>
</dbReference>
<dbReference type="GO" id="GO:0016918">
    <property type="term" value="F:retinal binding"/>
    <property type="evidence" value="ECO:0007669"/>
    <property type="project" value="UniProtKB-KW"/>
</dbReference>
<dbReference type="GO" id="GO:0019841">
    <property type="term" value="F:retinol binding"/>
    <property type="evidence" value="ECO:0000250"/>
    <property type="project" value="UniProtKB"/>
</dbReference>
<dbReference type="FunFam" id="1.20.120.1100:FF:000001">
    <property type="entry name" value="Fatty-acid and retinol-binding protein 1"/>
    <property type="match status" value="1"/>
</dbReference>
<dbReference type="Gene3D" id="1.20.120.1100">
    <property type="match status" value="1"/>
</dbReference>
<dbReference type="InterPro" id="IPR008632">
    <property type="entry name" value="Gp-FAR-1"/>
</dbReference>
<dbReference type="PANTHER" id="PTHR31418">
    <property type="entry name" value="FATTY-ACID AND RETINOL-BINDING PROTEIN 1"/>
    <property type="match status" value="1"/>
</dbReference>
<dbReference type="PANTHER" id="PTHR31418:SF7">
    <property type="entry name" value="FATTY-ACID AND RETINOL-BINDING PROTEIN 1"/>
    <property type="match status" value="1"/>
</dbReference>
<dbReference type="Pfam" id="PF05823">
    <property type="entry name" value="Gp-FAR-1"/>
    <property type="match status" value="1"/>
</dbReference>
<reference evidence="5 6" key="1">
    <citation type="journal article" date="2002" name="Mol. Biochem. Parasitol.">
        <title>The FAR proteins of filarial nematodes: secretion, glycosylation and lipid binding characteristics.</title>
        <authorList>
            <person name="Garofalo A."/>
            <person name="Klager S.L."/>
            <person name="Rowlinson M.C."/>
            <person name="Nirmalan N."/>
            <person name="Klion A.D."/>
            <person name="Allen J.E."/>
            <person name="Kennedy M.W."/>
            <person name="Bradley J.E."/>
        </authorList>
    </citation>
    <scope>NUCLEOTIDE SEQUENCE [MRNA]</scope>
    <scope>SUBCELLULAR LOCATION</scope>
    <scope>GLYCOSYLATION</scope>
</reference>
<evidence type="ECO:0000250" key="1"/>
<evidence type="ECO:0000250" key="2">
    <source>
        <dbReference type="UniProtKB" id="Q25619"/>
    </source>
</evidence>
<evidence type="ECO:0000255" key="3"/>
<evidence type="ECO:0000269" key="4">
    <source>
    </source>
</evidence>
<evidence type="ECO:0000305" key="5"/>
<evidence type="ECO:0000312" key="6">
    <source>
        <dbReference type="EMBL" id="AAL33789.1"/>
    </source>
</evidence>
<keyword id="KW-0175">Coiled coil</keyword>
<keyword id="KW-0325">Glycoprotein</keyword>
<keyword id="KW-0446">Lipid-binding</keyword>
<keyword id="KW-0683">Retinol-binding</keyword>
<keyword id="KW-0964">Secreted</keyword>
<keyword id="KW-0732">Signal</keyword>
<keyword id="KW-0845">Vitamin A</keyword>
<sequence>MYHQLILMALIGVIMANVVPFSMSNIPEEYKEFIPEEVKNFYKNLTQEDRQILRELASKHATFTNEDAALEALKNKSDKLYQKAVELRNFVKAKIDSLKPDAKTFVDEIIAKVRSLRPEDGQKLDMEKIKQAARDIIAKYEALNEETKEELKATFPNTTKIITNEKFKRIANSFLQKN</sequence>
<comment type="function">
    <text evidence="1">Binds retinol and different fatty acids.</text>
</comment>
<comment type="subcellular location">
    <subcellularLocation>
        <location evidence="4">Secreted</location>
    </subcellularLocation>
</comment>
<comment type="PTM">
    <text evidence="4">N-glycosylated.</text>
</comment>
<comment type="similarity">
    <text evidence="2 5">Belongs to the fatty-acid and retinol-binding protein (FARBP) family.</text>
</comment>
<organism>
    <name type="scientific">Onchocerca gutturosa</name>
    <dbReference type="NCBI Taxonomy" id="6283"/>
    <lineage>
        <taxon>Eukaryota</taxon>
        <taxon>Metazoa</taxon>
        <taxon>Ecdysozoa</taxon>
        <taxon>Nematoda</taxon>
        <taxon>Chromadorea</taxon>
        <taxon>Rhabditida</taxon>
        <taxon>Spirurina</taxon>
        <taxon>Spiruromorpha</taxon>
        <taxon>Filarioidea</taxon>
        <taxon>Onchocercidae</taxon>
        <taxon>Onchocerca</taxon>
    </lineage>
</organism>